<accession>B7LQD9</accession>
<gene>
    <name evidence="1" type="primary">rpsU</name>
    <name type="ordered locus">EFER_3006</name>
</gene>
<feature type="chain" id="PRO_1000120622" description="Small ribosomal subunit protein bS21">
    <location>
        <begin position="1"/>
        <end position="71"/>
    </location>
</feature>
<feature type="region of interest" description="Disordered" evidence="2">
    <location>
        <begin position="43"/>
        <end position="71"/>
    </location>
</feature>
<feature type="compositionally biased region" description="Basic residues" evidence="2">
    <location>
        <begin position="46"/>
        <end position="59"/>
    </location>
</feature>
<feature type="compositionally biased region" description="Basic and acidic residues" evidence="2">
    <location>
        <begin position="60"/>
        <end position="71"/>
    </location>
</feature>
<evidence type="ECO:0000255" key="1">
    <source>
        <dbReference type="HAMAP-Rule" id="MF_00358"/>
    </source>
</evidence>
<evidence type="ECO:0000256" key="2">
    <source>
        <dbReference type="SAM" id="MobiDB-lite"/>
    </source>
</evidence>
<evidence type="ECO:0000305" key="3"/>
<comment type="similarity">
    <text evidence="1">Belongs to the bacterial ribosomal protein bS21 family.</text>
</comment>
<protein>
    <recommendedName>
        <fullName evidence="1">Small ribosomal subunit protein bS21</fullName>
    </recommendedName>
    <alternativeName>
        <fullName evidence="3">30S ribosomal protein S21</fullName>
    </alternativeName>
</protein>
<keyword id="KW-0687">Ribonucleoprotein</keyword>
<keyword id="KW-0689">Ribosomal protein</keyword>
<name>RS21_ESCF3</name>
<sequence length="71" mass="8500">MPVIKVRENEPFDVALRRFKRSCEKAGVLAEVRRREFYEKPTTERKRAKASAVKRHAKKLARENARRTRLY</sequence>
<reference key="1">
    <citation type="journal article" date="2009" name="PLoS Genet.">
        <title>Organised genome dynamics in the Escherichia coli species results in highly diverse adaptive paths.</title>
        <authorList>
            <person name="Touchon M."/>
            <person name="Hoede C."/>
            <person name="Tenaillon O."/>
            <person name="Barbe V."/>
            <person name="Baeriswyl S."/>
            <person name="Bidet P."/>
            <person name="Bingen E."/>
            <person name="Bonacorsi S."/>
            <person name="Bouchier C."/>
            <person name="Bouvet O."/>
            <person name="Calteau A."/>
            <person name="Chiapello H."/>
            <person name="Clermont O."/>
            <person name="Cruveiller S."/>
            <person name="Danchin A."/>
            <person name="Diard M."/>
            <person name="Dossat C."/>
            <person name="Karoui M.E."/>
            <person name="Frapy E."/>
            <person name="Garry L."/>
            <person name="Ghigo J.M."/>
            <person name="Gilles A.M."/>
            <person name="Johnson J."/>
            <person name="Le Bouguenec C."/>
            <person name="Lescat M."/>
            <person name="Mangenot S."/>
            <person name="Martinez-Jehanne V."/>
            <person name="Matic I."/>
            <person name="Nassif X."/>
            <person name="Oztas S."/>
            <person name="Petit M.A."/>
            <person name="Pichon C."/>
            <person name="Rouy Z."/>
            <person name="Ruf C.S."/>
            <person name="Schneider D."/>
            <person name="Tourret J."/>
            <person name="Vacherie B."/>
            <person name="Vallenet D."/>
            <person name="Medigue C."/>
            <person name="Rocha E.P.C."/>
            <person name="Denamur E."/>
        </authorList>
    </citation>
    <scope>NUCLEOTIDE SEQUENCE [LARGE SCALE GENOMIC DNA]</scope>
    <source>
        <strain>ATCC 35469 / DSM 13698 / BCRC 15582 / CCUG 18766 / IAM 14443 / JCM 21226 / LMG 7866 / NBRC 102419 / NCTC 12128 / CDC 0568-73</strain>
    </source>
</reference>
<dbReference type="EMBL" id="CU928158">
    <property type="protein sequence ID" value="CAQ90499.1"/>
    <property type="molecule type" value="Genomic_DNA"/>
</dbReference>
<dbReference type="RefSeq" id="WP_001144069.1">
    <property type="nucleotide sequence ID" value="NC_011740.1"/>
</dbReference>
<dbReference type="SMR" id="B7LQD9"/>
<dbReference type="GeneID" id="98390195"/>
<dbReference type="KEGG" id="efe:EFER_3006"/>
<dbReference type="HOGENOM" id="CLU_159258_1_0_6"/>
<dbReference type="OrthoDB" id="9799244at2"/>
<dbReference type="Proteomes" id="UP000000745">
    <property type="component" value="Chromosome"/>
</dbReference>
<dbReference type="GO" id="GO:1990904">
    <property type="term" value="C:ribonucleoprotein complex"/>
    <property type="evidence" value="ECO:0007669"/>
    <property type="project" value="UniProtKB-KW"/>
</dbReference>
<dbReference type="GO" id="GO:0005840">
    <property type="term" value="C:ribosome"/>
    <property type="evidence" value="ECO:0007669"/>
    <property type="project" value="UniProtKB-KW"/>
</dbReference>
<dbReference type="GO" id="GO:0003735">
    <property type="term" value="F:structural constituent of ribosome"/>
    <property type="evidence" value="ECO:0007669"/>
    <property type="project" value="InterPro"/>
</dbReference>
<dbReference type="GO" id="GO:0006412">
    <property type="term" value="P:translation"/>
    <property type="evidence" value="ECO:0007669"/>
    <property type="project" value="UniProtKB-UniRule"/>
</dbReference>
<dbReference type="FunFam" id="1.20.5.1150:FF:000001">
    <property type="entry name" value="30S ribosomal protein S21"/>
    <property type="match status" value="1"/>
</dbReference>
<dbReference type="Gene3D" id="1.20.5.1150">
    <property type="entry name" value="Ribosomal protein S8"/>
    <property type="match status" value="1"/>
</dbReference>
<dbReference type="HAMAP" id="MF_00358">
    <property type="entry name" value="Ribosomal_bS21"/>
    <property type="match status" value="1"/>
</dbReference>
<dbReference type="InterPro" id="IPR001911">
    <property type="entry name" value="Ribosomal_bS21"/>
</dbReference>
<dbReference type="InterPro" id="IPR018278">
    <property type="entry name" value="Ribosomal_bS21_CS"/>
</dbReference>
<dbReference type="InterPro" id="IPR038380">
    <property type="entry name" value="Ribosomal_bS21_sf"/>
</dbReference>
<dbReference type="NCBIfam" id="TIGR00030">
    <property type="entry name" value="S21p"/>
    <property type="match status" value="1"/>
</dbReference>
<dbReference type="PANTHER" id="PTHR21109">
    <property type="entry name" value="MITOCHONDRIAL 28S RIBOSOMAL PROTEIN S21"/>
    <property type="match status" value="1"/>
</dbReference>
<dbReference type="PANTHER" id="PTHR21109:SF22">
    <property type="entry name" value="SMALL RIBOSOMAL SUBUNIT PROTEIN BS21"/>
    <property type="match status" value="1"/>
</dbReference>
<dbReference type="Pfam" id="PF01165">
    <property type="entry name" value="Ribosomal_S21"/>
    <property type="match status" value="1"/>
</dbReference>
<dbReference type="PRINTS" id="PR00976">
    <property type="entry name" value="RIBOSOMALS21"/>
</dbReference>
<dbReference type="PROSITE" id="PS01181">
    <property type="entry name" value="RIBOSOMAL_S21"/>
    <property type="match status" value="1"/>
</dbReference>
<organism>
    <name type="scientific">Escherichia fergusonii (strain ATCC 35469 / DSM 13698 / CCUG 18766 / IAM 14443 / JCM 21226 / LMG 7866 / NBRC 102419 / NCTC 12128 / CDC 0568-73)</name>
    <dbReference type="NCBI Taxonomy" id="585054"/>
    <lineage>
        <taxon>Bacteria</taxon>
        <taxon>Pseudomonadati</taxon>
        <taxon>Pseudomonadota</taxon>
        <taxon>Gammaproteobacteria</taxon>
        <taxon>Enterobacterales</taxon>
        <taxon>Enterobacteriaceae</taxon>
        <taxon>Escherichia</taxon>
    </lineage>
</organism>
<proteinExistence type="inferred from homology"/>